<dbReference type="EMBL" id="X63763">
    <property type="protein sequence ID" value="CAA45295.1"/>
    <property type="molecule type" value="Genomic_DNA"/>
</dbReference>
<dbReference type="PIR" id="S22208">
    <property type="entry name" value="S22208"/>
</dbReference>
<dbReference type="SMR" id="P25908"/>
<dbReference type="CDD" id="cd00158">
    <property type="entry name" value="RHOD"/>
    <property type="match status" value="1"/>
</dbReference>
<dbReference type="Gene3D" id="3.40.250.10">
    <property type="entry name" value="Rhodanese-like domain"/>
    <property type="match status" value="1"/>
</dbReference>
<dbReference type="InterPro" id="IPR001763">
    <property type="entry name" value="Rhodanese-like_dom"/>
</dbReference>
<dbReference type="InterPro" id="IPR036873">
    <property type="entry name" value="Rhodanese-like_dom_sf"/>
</dbReference>
<dbReference type="Pfam" id="PF00581">
    <property type="entry name" value="Rhodanese"/>
    <property type="match status" value="1"/>
</dbReference>
<dbReference type="SMART" id="SM00450">
    <property type="entry name" value="RHOD"/>
    <property type="match status" value="1"/>
</dbReference>
<dbReference type="SUPFAM" id="SSF52821">
    <property type="entry name" value="Rhodanese/Cell cycle control phosphatase"/>
    <property type="match status" value="1"/>
</dbReference>
<dbReference type="PROSITE" id="PS50206">
    <property type="entry name" value="RHODANESE_3"/>
    <property type="match status" value="1"/>
</dbReference>
<protein>
    <recommendedName>
        <fullName>Uncharacterized 16.5 kDa protein in psaL 5'region</fullName>
    </recommendedName>
</protein>
<feature type="chain" id="PRO_0000139431" description="Uncharacterized 16.5 kDa protein in psaL 5'region">
    <location>
        <begin position="1"/>
        <end position="150"/>
    </location>
</feature>
<feature type="domain" description="Rhodanese" evidence="1">
    <location>
        <begin position="19"/>
        <end position="93"/>
    </location>
</feature>
<reference key="1">
    <citation type="submission" date="1992-01" db="EMBL/GenBank/DDBJ databases">
        <authorList>
            <person name="Muehlenhoff U."/>
            <person name="Haehnel W."/>
            <person name="Witt H.T."/>
            <person name="Herrmann R.G."/>
        </authorList>
    </citation>
    <scope>NUCLEOTIDE SEQUENCE [GENOMIC DNA]</scope>
</reference>
<accession>P25908</accession>
<name>YPSL_SYNEL</name>
<sequence length="150" mass="16525">MAEIPEMTVQELKALMDSGAQDYVLVDVRNPNEYEIARIPGSVLVPLSEIENGPGVEKIRSLLNGHRLLVHCKMGGPLPKRWASSKRLALRESISKGASTLGVRKSTPAYPPTNPRLGAGRRKGMLRYMNFLEEKHALSRAIAALPRITT</sequence>
<evidence type="ECO:0000255" key="1">
    <source>
        <dbReference type="PROSITE-ProRule" id="PRU00173"/>
    </source>
</evidence>
<organism>
    <name type="scientific">Synechococcus elongatus</name>
    <dbReference type="NCBI Taxonomy" id="32046"/>
    <lineage>
        <taxon>Bacteria</taxon>
        <taxon>Bacillati</taxon>
        <taxon>Cyanobacteriota</taxon>
        <taxon>Cyanophyceae</taxon>
        <taxon>Synechococcales</taxon>
        <taxon>Synechococcaceae</taxon>
        <taxon>Synechococcus</taxon>
    </lineage>
</organism>
<proteinExistence type="predicted"/>